<organism>
    <name type="scientific">Chara vulgaris</name>
    <name type="common">Common stonewort</name>
    <dbReference type="NCBI Taxonomy" id="55564"/>
    <lineage>
        <taxon>Eukaryota</taxon>
        <taxon>Viridiplantae</taxon>
        <taxon>Streptophyta</taxon>
        <taxon>Charophyceae</taxon>
        <taxon>Charales</taxon>
        <taxon>Characeae</taxon>
        <taxon>Chara</taxon>
    </lineage>
</organism>
<gene>
    <name evidence="1" type="primary">psbE</name>
</gene>
<proteinExistence type="inferred from homology"/>
<geneLocation type="chloroplast"/>
<evidence type="ECO:0000255" key="1">
    <source>
        <dbReference type="HAMAP-Rule" id="MF_00642"/>
    </source>
</evidence>
<keyword id="KW-0150">Chloroplast</keyword>
<keyword id="KW-0249">Electron transport</keyword>
<keyword id="KW-0349">Heme</keyword>
<keyword id="KW-0408">Iron</keyword>
<keyword id="KW-0472">Membrane</keyword>
<keyword id="KW-0479">Metal-binding</keyword>
<keyword id="KW-0602">Photosynthesis</keyword>
<keyword id="KW-0604">Photosystem II</keyword>
<keyword id="KW-0934">Plastid</keyword>
<keyword id="KW-0793">Thylakoid</keyword>
<keyword id="KW-0812">Transmembrane</keyword>
<keyword id="KW-1133">Transmembrane helix</keyword>
<keyword id="KW-0813">Transport</keyword>
<feature type="chain" id="PRO_0000275702" description="Cytochrome b559 subunit alpha">
    <location>
        <begin position="1"/>
        <end position="83"/>
    </location>
</feature>
<feature type="transmembrane region" description="Helical" evidence="1">
    <location>
        <begin position="21"/>
        <end position="35"/>
    </location>
</feature>
<feature type="binding site" description="axial binding residue" evidence="1">
    <location>
        <position position="23"/>
    </location>
    <ligand>
        <name>heme</name>
        <dbReference type="ChEBI" id="CHEBI:30413"/>
        <note>ligand shared with beta subunit</note>
    </ligand>
    <ligandPart>
        <name>Fe</name>
        <dbReference type="ChEBI" id="CHEBI:18248"/>
    </ligandPart>
</feature>
<accession>Q1ACI7</accession>
<reference key="1">
    <citation type="journal article" date="2006" name="Mol. Biol. Evol.">
        <title>The chloroplast genome sequence of Chara vulgaris sheds new light into the closest green algal relatives of land plants.</title>
        <authorList>
            <person name="Turmel M."/>
            <person name="Otis C."/>
            <person name="Lemieux C."/>
        </authorList>
    </citation>
    <scope>NUCLEOTIDE SEQUENCE [LARGE SCALE GENOMIC DNA]</scope>
</reference>
<dbReference type="EMBL" id="DQ229107">
    <property type="protein sequence ID" value="ABA61936.1"/>
    <property type="molecule type" value="Genomic_DNA"/>
</dbReference>
<dbReference type="RefSeq" id="YP_635760.1">
    <property type="nucleotide sequence ID" value="NC_008097.1"/>
</dbReference>
<dbReference type="SMR" id="Q1ACI7"/>
<dbReference type="GeneID" id="4100223"/>
<dbReference type="GO" id="GO:0009535">
    <property type="term" value="C:chloroplast thylakoid membrane"/>
    <property type="evidence" value="ECO:0007669"/>
    <property type="project" value="UniProtKB-SubCell"/>
</dbReference>
<dbReference type="GO" id="GO:0009539">
    <property type="term" value="C:photosystem II reaction center"/>
    <property type="evidence" value="ECO:0007669"/>
    <property type="project" value="InterPro"/>
</dbReference>
<dbReference type="GO" id="GO:0009055">
    <property type="term" value="F:electron transfer activity"/>
    <property type="evidence" value="ECO:0007669"/>
    <property type="project" value="UniProtKB-UniRule"/>
</dbReference>
<dbReference type="GO" id="GO:0020037">
    <property type="term" value="F:heme binding"/>
    <property type="evidence" value="ECO:0007669"/>
    <property type="project" value="InterPro"/>
</dbReference>
<dbReference type="GO" id="GO:0005506">
    <property type="term" value="F:iron ion binding"/>
    <property type="evidence" value="ECO:0007669"/>
    <property type="project" value="UniProtKB-UniRule"/>
</dbReference>
<dbReference type="GO" id="GO:0009767">
    <property type="term" value="P:photosynthetic electron transport chain"/>
    <property type="evidence" value="ECO:0007669"/>
    <property type="project" value="InterPro"/>
</dbReference>
<dbReference type="Gene3D" id="1.20.5.860">
    <property type="entry name" value="Photosystem II cytochrome b559, alpha subunit"/>
    <property type="match status" value="1"/>
</dbReference>
<dbReference type="HAMAP" id="MF_00642">
    <property type="entry name" value="PSII_PsbE"/>
    <property type="match status" value="1"/>
</dbReference>
<dbReference type="InterPro" id="IPR006217">
    <property type="entry name" value="PSII_cyt_b559_asu"/>
</dbReference>
<dbReference type="InterPro" id="IPR037025">
    <property type="entry name" value="PSII_cyt_b559_asu_sf"/>
</dbReference>
<dbReference type="InterPro" id="IPR006216">
    <property type="entry name" value="PSII_cyt_b559_CS"/>
</dbReference>
<dbReference type="InterPro" id="IPR013081">
    <property type="entry name" value="PSII_cyt_b559_N"/>
</dbReference>
<dbReference type="InterPro" id="IPR013082">
    <property type="entry name" value="PSII_cytb559_asu_lum"/>
</dbReference>
<dbReference type="NCBIfam" id="TIGR01332">
    <property type="entry name" value="cyt_b559_alpha"/>
    <property type="match status" value="1"/>
</dbReference>
<dbReference type="PANTHER" id="PTHR33391">
    <property type="entry name" value="CYTOCHROME B559 SUBUNIT BETA-RELATED"/>
    <property type="match status" value="1"/>
</dbReference>
<dbReference type="PANTHER" id="PTHR33391:SF9">
    <property type="entry name" value="CYTOCHROME B559 SUBUNIT BETA-RELATED"/>
    <property type="match status" value="1"/>
</dbReference>
<dbReference type="Pfam" id="PF00283">
    <property type="entry name" value="Cytochrom_B559"/>
    <property type="match status" value="1"/>
</dbReference>
<dbReference type="Pfam" id="PF00284">
    <property type="entry name" value="Cytochrom_B559a"/>
    <property type="match status" value="1"/>
</dbReference>
<dbReference type="PIRSF" id="PIRSF000036">
    <property type="entry name" value="PsbE"/>
    <property type="match status" value="1"/>
</dbReference>
<dbReference type="SUPFAM" id="SSF161045">
    <property type="entry name" value="Cytochrome b559 subunits"/>
    <property type="match status" value="1"/>
</dbReference>
<dbReference type="PROSITE" id="PS00537">
    <property type="entry name" value="CYTOCHROME_B559"/>
    <property type="match status" value="1"/>
</dbReference>
<name>PSBE_CHAVU</name>
<comment type="function">
    <text evidence="1">This b-type cytochrome is tightly associated with the reaction center of photosystem II (PSII). PSII is a light-driven water:plastoquinone oxidoreductase that uses light energy to abstract electrons from H(2)O, generating O(2) and a proton gradient subsequently used for ATP formation. It consists of a core antenna complex that captures photons, and an electron transfer chain that converts photonic excitation into a charge separation.</text>
</comment>
<comment type="cofactor">
    <cofactor evidence="1">
        <name>heme b</name>
        <dbReference type="ChEBI" id="CHEBI:60344"/>
    </cofactor>
    <text evidence="1">With its partner (PsbF) binds heme. PSII binds additional chlorophylls, carotenoids and specific lipids.</text>
</comment>
<comment type="subunit">
    <text evidence="1">Heterodimer of an alpha subunit and a beta subunit. PSII is composed of 1 copy each of membrane proteins PsbA, PsbB, PsbC, PsbD, PsbE, PsbF, PsbH, PsbI, PsbJ, PsbK, PsbL, PsbM, PsbT, PsbX, PsbY, PsbZ, Psb30/Ycf12, at least 3 peripheral proteins of the oxygen-evolving complex and a large number of cofactors. It forms dimeric complexes.</text>
</comment>
<comment type="subcellular location">
    <subcellularLocation>
        <location evidence="1">Plastid</location>
        <location evidence="1">Chloroplast thylakoid membrane</location>
        <topology evidence="1">Single-pass membrane protein</topology>
    </subcellularLocation>
</comment>
<comment type="similarity">
    <text evidence="1">Belongs to the PsbE/PsbF family.</text>
</comment>
<protein>
    <recommendedName>
        <fullName evidence="1">Cytochrome b559 subunit alpha</fullName>
    </recommendedName>
    <alternativeName>
        <fullName evidence="1">PSII reaction center subunit V</fullName>
    </alternativeName>
</protein>
<sequence length="83" mass="9520">MSGNTGERPFADIITSIRYWVIHSITIPSLFIAGWLFVSTGLAYDVFGTPRPNEYFTENRQEVPLITDRFNSLEQIESYTKSI</sequence>